<dbReference type="EMBL" id="CU329671">
    <property type="protein sequence ID" value="CAA22624.1"/>
    <property type="molecule type" value="Genomic_DNA"/>
</dbReference>
<dbReference type="PIR" id="T39954">
    <property type="entry name" value="T39954"/>
</dbReference>
<dbReference type="RefSeq" id="NP_595866.1">
    <property type="nucleotide sequence ID" value="NM_001021771.2"/>
</dbReference>
<dbReference type="SMR" id="O94466"/>
<dbReference type="BioGRID" id="277161">
    <property type="interactions" value="28"/>
</dbReference>
<dbReference type="FunCoup" id="O94466">
    <property type="interactions" value="366"/>
</dbReference>
<dbReference type="STRING" id="284812.O94466"/>
<dbReference type="iPTMnet" id="O94466"/>
<dbReference type="PaxDb" id="4896-SPBC23G7.08c.1"/>
<dbReference type="EnsemblFungi" id="SPBC23G7.08c.1">
    <property type="protein sequence ID" value="SPBC23G7.08c.1:pep"/>
    <property type="gene ID" value="SPBC23G7.08c"/>
</dbReference>
<dbReference type="GeneID" id="2540635"/>
<dbReference type="KEGG" id="spo:2540635"/>
<dbReference type="PomBase" id="SPBC23G7.08c">
    <property type="gene designation" value="rga7"/>
</dbReference>
<dbReference type="VEuPathDB" id="FungiDB:SPBC23G7.08c"/>
<dbReference type="eggNOG" id="KOG1450">
    <property type="taxonomic scope" value="Eukaryota"/>
</dbReference>
<dbReference type="HOGENOM" id="CLU_010730_3_0_1"/>
<dbReference type="InParanoid" id="O94466"/>
<dbReference type="OMA" id="DSGWQAR"/>
<dbReference type="PhylomeDB" id="O94466"/>
<dbReference type="Reactome" id="R-SPO-9013148">
    <property type="pathway name" value="CDC42 GTPase cycle"/>
</dbReference>
<dbReference type="Reactome" id="R-SPO-9013405">
    <property type="pathway name" value="RHOD GTPase cycle"/>
</dbReference>
<dbReference type="Reactome" id="R-SPO-9013424">
    <property type="pathway name" value="RHOV GTPase cycle"/>
</dbReference>
<dbReference type="Reactome" id="R-SPO-9035034">
    <property type="pathway name" value="RHOF GTPase cycle"/>
</dbReference>
<dbReference type="PRO" id="PR:O94466"/>
<dbReference type="Proteomes" id="UP000002485">
    <property type="component" value="Chromosome II"/>
</dbReference>
<dbReference type="GO" id="GO:0030479">
    <property type="term" value="C:actin cortical patch"/>
    <property type="evidence" value="ECO:0000266"/>
    <property type="project" value="PomBase"/>
</dbReference>
<dbReference type="GO" id="GO:0005938">
    <property type="term" value="C:cell cortex"/>
    <property type="evidence" value="ECO:0000318"/>
    <property type="project" value="GO_Central"/>
</dbReference>
<dbReference type="GO" id="GO:0051285">
    <property type="term" value="C:cell cortex of cell tip"/>
    <property type="evidence" value="ECO:0000314"/>
    <property type="project" value="PomBase"/>
</dbReference>
<dbReference type="GO" id="GO:0032153">
    <property type="term" value="C:cell division site"/>
    <property type="evidence" value="ECO:0000314"/>
    <property type="project" value="PomBase"/>
</dbReference>
<dbReference type="GO" id="GO:0051286">
    <property type="term" value="C:cell tip"/>
    <property type="evidence" value="ECO:0000314"/>
    <property type="project" value="PomBase"/>
</dbReference>
<dbReference type="GO" id="GO:0032154">
    <property type="term" value="C:cleavage furrow"/>
    <property type="evidence" value="ECO:0000314"/>
    <property type="project" value="PomBase"/>
</dbReference>
<dbReference type="GO" id="GO:0009898">
    <property type="term" value="C:cytoplasmic side of plasma membrane"/>
    <property type="evidence" value="ECO:0000314"/>
    <property type="project" value="PomBase"/>
</dbReference>
<dbReference type="GO" id="GO:0005829">
    <property type="term" value="C:cytosol"/>
    <property type="evidence" value="ECO:0007005"/>
    <property type="project" value="PomBase"/>
</dbReference>
<dbReference type="GO" id="GO:0005794">
    <property type="term" value="C:Golgi apparatus"/>
    <property type="evidence" value="ECO:0000314"/>
    <property type="project" value="PomBase"/>
</dbReference>
<dbReference type="GO" id="GO:0110085">
    <property type="term" value="C:mitotic actomyosin contractile ring"/>
    <property type="evidence" value="ECO:0000314"/>
    <property type="project" value="PomBase"/>
</dbReference>
<dbReference type="GO" id="GO:0120104">
    <property type="term" value="C:mitotic actomyosin contractile ring, proximal layer"/>
    <property type="evidence" value="ECO:0000314"/>
    <property type="project" value="PomBase"/>
</dbReference>
<dbReference type="GO" id="GO:0005886">
    <property type="term" value="C:plasma membrane"/>
    <property type="evidence" value="ECO:0000318"/>
    <property type="project" value="GO_Central"/>
</dbReference>
<dbReference type="GO" id="GO:0030427">
    <property type="term" value="C:site of polarized growth"/>
    <property type="evidence" value="ECO:0000318"/>
    <property type="project" value="GO_Central"/>
</dbReference>
<dbReference type="GO" id="GO:0005096">
    <property type="term" value="F:GTPase activator activity"/>
    <property type="evidence" value="ECO:0000315"/>
    <property type="project" value="PomBase"/>
</dbReference>
<dbReference type="GO" id="GO:0030036">
    <property type="term" value="P:actin cytoskeleton organization"/>
    <property type="evidence" value="ECO:0000266"/>
    <property type="project" value="PomBase"/>
</dbReference>
<dbReference type="GO" id="GO:0043001">
    <property type="term" value="P:Golgi to plasma membrane protein transport"/>
    <property type="evidence" value="ECO:0000315"/>
    <property type="project" value="PomBase"/>
</dbReference>
<dbReference type="GO" id="GO:0140278">
    <property type="term" value="P:mitotic division septum assembly"/>
    <property type="evidence" value="ECO:0000315"/>
    <property type="project" value="PomBase"/>
</dbReference>
<dbReference type="GO" id="GO:1903138">
    <property type="term" value="P:negative regulation of cell integrity MAPK cascade"/>
    <property type="evidence" value="ECO:0000315"/>
    <property type="project" value="PomBase"/>
</dbReference>
<dbReference type="GO" id="GO:0140281">
    <property type="term" value="P:positive regulation of mitotic division septum assembly"/>
    <property type="evidence" value="ECO:0000315"/>
    <property type="project" value="PomBase"/>
</dbReference>
<dbReference type="GO" id="GO:0007264">
    <property type="term" value="P:small GTPase-mediated signal transduction"/>
    <property type="evidence" value="ECO:0000318"/>
    <property type="project" value="GO_Central"/>
</dbReference>
<dbReference type="CDD" id="cd07652">
    <property type="entry name" value="F-BAR_Rgd1"/>
    <property type="match status" value="1"/>
</dbReference>
<dbReference type="CDD" id="cd04398">
    <property type="entry name" value="RhoGAP_fRGD1"/>
    <property type="match status" value="1"/>
</dbReference>
<dbReference type="Gene3D" id="1.20.1270.60">
    <property type="entry name" value="Arfaptin homology (AH) domain/BAR domain"/>
    <property type="match status" value="1"/>
</dbReference>
<dbReference type="Gene3D" id="1.10.555.10">
    <property type="entry name" value="Rho GTPase activation protein"/>
    <property type="match status" value="1"/>
</dbReference>
<dbReference type="InterPro" id="IPR027267">
    <property type="entry name" value="AH/BAR_dom_sf"/>
</dbReference>
<dbReference type="InterPro" id="IPR031160">
    <property type="entry name" value="F_BAR"/>
</dbReference>
<dbReference type="InterPro" id="IPR001060">
    <property type="entry name" value="FCH_dom"/>
</dbReference>
<dbReference type="InterPro" id="IPR050729">
    <property type="entry name" value="Rho-GAP"/>
</dbReference>
<dbReference type="InterPro" id="IPR008936">
    <property type="entry name" value="Rho_GTPase_activation_prot"/>
</dbReference>
<dbReference type="InterPro" id="IPR000198">
    <property type="entry name" value="RhoGAP_dom"/>
</dbReference>
<dbReference type="PANTHER" id="PTHR23176:SF137">
    <property type="entry name" value="RHO-GTPASE-ACTIVATING PROTEIN 7-RELATED"/>
    <property type="match status" value="1"/>
</dbReference>
<dbReference type="PANTHER" id="PTHR23176">
    <property type="entry name" value="RHO/RAC/CDC GTPASE-ACTIVATING PROTEIN"/>
    <property type="match status" value="1"/>
</dbReference>
<dbReference type="Pfam" id="PF00611">
    <property type="entry name" value="FCH"/>
    <property type="match status" value="1"/>
</dbReference>
<dbReference type="Pfam" id="PF00620">
    <property type="entry name" value="RhoGAP"/>
    <property type="match status" value="1"/>
</dbReference>
<dbReference type="SMART" id="SM00055">
    <property type="entry name" value="FCH"/>
    <property type="match status" value="1"/>
</dbReference>
<dbReference type="SMART" id="SM00324">
    <property type="entry name" value="RhoGAP"/>
    <property type="match status" value="1"/>
</dbReference>
<dbReference type="SUPFAM" id="SSF103657">
    <property type="entry name" value="BAR/IMD domain-like"/>
    <property type="match status" value="1"/>
</dbReference>
<dbReference type="SUPFAM" id="SSF48350">
    <property type="entry name" value="GTPase activation domain, GAP"/>
    <property type="match status" value="1"/>
</dbReference>
<dbReference type="PROSITE" id="PS51741">
    <property type="entry name" value="F_BAR"/>
    <property type="match status" value="1"/>
</dbReference>
<dbReference type="PROSITE" id="PS50238">
    <property type="entry name" value="RHOGAP"/>
    <property type="match status" value="1"/>
</dbReference>
<organism>
    <name type="scientific">Schizosaccharomyces pombe (strain 972 / ATCC 24843)</name>
    <name type="common">Fission yeast</name>
    <dbReference type="NCBI Taxonomy" id="284812"/>
    <lineage>
        <taxon>Eukaryota</taxon>
        <taxon>Fungi</taxon>
        <taxon>Dikarya</taxon>
        <taxon>Ascomycota</taxon>
        <taxon>Taphrinomycotina</taxon>
        <taxon>Schizosaccharomycetes</taxon>
        <taxon>Schizosaccharomycetales</taxon>
        <taxon>Schizosaccharomycetaceae</taxon>
        <taxon>Schizosaccharomyces</taxon>
    </lineage>
</organism>
<keyword id="KW-0175">Coiled coil</keyword>
<keyword id="KW-0343">GTPase activation</keyword>
<keyword id="KW-0597">Phosphoprotein</keyword>
<keyword id="KW-1185">Reference proteome</keyword>
<name>RGA7_SCHPO</name>
<proteinExistence type="evidence at protein level"/>
<protein>
    <recommendedName>
        <fullName>Probable Rho-GTPase-activating protein 7</fullName>
    </recommendedName>
</protein>
<feature type="chain" id="PRO_0000097315" description="Probable Rho-GTPase-activating protein 7">
    <location>
        <begin position="1"/>
        <end position="695"/>
    </location>
</feature>
<feature type="domain" description="F-BAR" evidence="2">
    <location>
        <begin position="33"/>
        <end position="307"/>
    </location>
</feature>
<feature type="domain" description="Rho-GAP" evidence="1">
    <location>
        <begin position="506"/>
        <end position="692"/>
    </location>
</feature>
<feature type="region of interest" description="Disordered" evidence="3">
    <location>
        <begin position="1"/>
        <end position="26"/>
    </location>
</feature>
<feature type="region of interest" description="Disordered" evidence="3">
    <location>
        <begin position="320"/>
        <end position="499"/>
    </location>
</feature>
<feature type="compositionally biased region" description="Low complexity" evidence="3">
    <location>
        <begin position="1"/>
        <end position="11"/>
    </location>
</feature>
<feature type="compositionally biased region" description="Polar residues" evidence="3">
    <location>
        <begin position="336"/>
        <end position="348"/>
    </location>
</feature>
<feature type="compositionally biased region" description="Polar residues" evidence="3">
    <location>
        <begin position="366"/>
        <end position="382"/>
    </location>
</feature>
<feature type="compositionally biased region" description="Low complexity" evidence="3">
    <location>
        <begin position="383"/>
        <end position="432"/>
    </location>
</feature>
<feature type="compositionally biased region" description="Low complexity" evidence="3">
    <location>
        <begin position="458"/>
        <end position="467"/>
    </location>
</feature>
<feature type="compositionally biased region" description="Low complexity" evidence="3">
    <location>
        <begin position="488"/>
        <end position="499"/>
    </location>
</feature>
<feature type="site" description="Arginine finger; crucial for GTP hydrolysis by stabilizing the transition state" evidence="1">
    <location>
        <position position="542"/>
    </location>
</feature>
<feature type="modified residue" description="Phosphoserine" evidence="4">
    <location>
        <position position="496"/>
    </location>
</feature>
<feature type="modified residue" description="Phosphoserine" evidence="4">
    <location>
        <position position="497"/>
    </location>
</feature>
<reference key="1">
    <citation type="journal article" date="2002" name="Nature">
        <title>The genome sequence of Schizosaccharomyces pombe.</title>
        <authorList>
            <person name="Wood V."/>
            <person name="Gwilliam R."/>
            <person name="Rajandream M.A."/>
            <person name="Lyne M.H."/>
            <person name="Lyne R."/>
            <person name="Stewart A."/>
            <person name="Sgouros J.G."/>
            <person name="Peat N."/>
            <person name="Hayles J."/>
            <person name="Baker S.G."/>
            <person name="Basham D."/>
            <person name="Bowman S."/>
            <person name="Brooks K."/>
            <person name="Brown D."/>
            <person name="Brown S."/>
            <person name="Chillingworth T."/>
            <person name="Churcher C.M."/>
            <person name="Collins M."/>
            <person name="Connor R."/>
            <person name="Cronin A."/>
            <person name="Davis P."/>
            <person name="Feltwell T."/>
            <person name="Fraser A."/>
            <person name="Gentles S."/>
            <person name="Goble A."/>
            <person name="Hamlin N."/>
            <person name="Harris D.E."/>
            <person name="Hidalgo J."/>
            <person name="Hodgson G."/>
            <person name="Holroyd S."/>
            <person name="Hornsby T."/>
            <person name="Howarth S."/>
            <person name="Huckle E.J."/>
            <person name="Hunt S."/>
            <person name="Jagels K."/>
            <person name="James K.D."/>
            <person name="Jones L."/>
            <person name="Jones M."/>
            <person name="Leather S."/>
            <person name="McDonald S."/>
            <person name="McLean J."/>
            <person name="Mooney P."/>
            <person name="Moule S."/>
            <person name="Mungall K.L."/>
            <person name="Murphy L.D."/>
            <person name="Niblett D."/>
            <person name="Odell C."/>
            <person name="Oliver K."/>
            <person name="O'Neil S."/>
            <person name="Pearson D."/>
            <person name="Quail M.A."/>
            <person name="Rabbinowitsch E."/>
            <person name="Rutherford K.M."/>
            <person name="Rutter S."/>
            <person name="Saunders D."/>
            <person name="Seeger K."/>
            <person name="Sharp S."/>
            <person name="Skelton J."/>
            <person name="Simmonds M.N."/>
            <person name="Squares R."/>
            <person name="Squares S."/>
            <person name="Stevens K."/>
            <person name="Taylor K."/>
            <person name="Taylor R.G."/>
            <person name="Tivey A."/>
            <person name="Walsh S.V."/>
            <person name="Warren T."/>
            <person name="Whitehead S."/>
            <person name="Woodward J.R."/>
            <person name="Volckaert G."/>
            <person name="Aert R."/>
            <person name="Robben J."/>
            <person name="Grymonprez B."/>
            <person name="Weltjens I."/>
            <person name="Vanstreels E."/>
            <person name="Rieger M."/>
            <person name="Schaefer M."/>
            <person name="Mueller-Auer S."/>
            <person name="Gabel C."/>
            <person name="Fuchs M."/>
            <person name="Duesterhoeft A."/>
            <person name="Fritzc C."/>
            <person name="Holzer E."/>
            <person name="Moestl D."/>
            <person name="Hilbert H."/>
            <person name="Borzym K."/>
            <person name="Langer I."/>
            <person name="Beck A."/>
            <person name="Lehrach H."/>
            <person name="Reinhardt R."/>
            <person name="Pohl T.M."/>
            <person name="Eger P."/>
            <person name="Zimmermann W."/>
            <person name="Wedler H."/>
            <person name="Wambutt R."/>
            <person name="Purnelle B."/>
            <person name="Goffeau A."/>
            <person name="Cadieu E."/>
            <person name="Dreano S."/>
            <person name="Gloux S."/>
            <person name="Lelaure V."/>
            <person name="Mottier S."/>
            <person name="Galibert F."/>
            <person name="Aves S.J."/>
            <person name="Xiang Z."/>
            <person name="Hunt C."/>
            <person name="Moore K."/>
            <person name="Hurst S.M."/>
            <person name="Lucas M."/>
            <person name="Rochet M."/>
            <person name="Gaillardin C."/>
            <person name="Tallada V.A."/>
            <person name="Garzon A."/>
            <person name="Thode G."/>
            <person name="Daga R.R."/>
            <person name="Cruzado L."/>
            <person name="Jimenez J."/>
            <person name="Sanchez M."/>
            <person name="del Rey F."/>
            <person name="Benito J."/>
            <person name="Dominguez A."/>
            <person name="Revuelta J.L."/>
            <person name="Moreno S."/>
            <person name="Armstrong J."/>
            <person name="Forsburg S.L."/>
            <person name="Cerutti L."/>
            <person name="Lowe T."/>
            <person name="McCombie W.R."/>
            <person name="Paulsen I."/>
            <person name="Potashkin J."/>
            <person name="Shpakovski G.V."/>
            <person name="Ussery D."/>
            <person name="Barrell B.G."/>
            <person name="Nurse P."/>
        </authorList>
    </citation>
    <scope>NUCLEOTIDE SEQUENCE [LARGE SCALE GENOMIC DNA]</scope>
    <source>
        <strain>972 / ATCC 24843</strain>
    </source>
</reference>
<reference key="2">
    <citation type="journal article" date="2008" name="J. Proteome Res.">
        <title>Phosphoproteome analysis of fission yeast.</title>
        <authorList>
            <person name="Wilson-Grady J.T."/>
            <person name="Villen J."/>
            <person name="Gygi S.P."/>
        </authorList>
    </citation>
    <scope>PHOSPHORYLATION [LARGE SCALE ANALYSIS] AT SER-496 AND SER-497</scope>
    <scope>IDENTIFICATION BY MASS SPECTROMETRY</scope>
</reference>
<gene>
    <name type="primary">rga7</name>
    <name type="ORF">SPBC23G7.08c</name>
</gene>
<accession>O94466</accession>
<evidence type="ECO:0000255" key="1">
    <source>
        <dbReference type="PROSITE-ProRule" id="PRU00172"/>
    </source>
</evidence>
<evidence type="ECO:0000255" key="2">
    <source>
        <dbReference type="PROSITE-ProRule" id="PRU01077"/>
    </source>
</evidence>
<evidence type="ECO:0000256" key="3">
    <source>
        <dbReference type="SAM" id="MobiDB-lite"/>
    </source>
</evidence>
<evidence type="ECO:0000269" key="4">
    <source>
    </source>
</evidence>
<sequence>MLSAPSSSTTPASPPTSPPNTTSSDDFAVLKEPKVEAILNSELGLAILNDRIKDYLLTCKELAGFFKKRSILEEESGKNLQKLAKSYLETFQSKHHSPQSFSASVITSMEIHEQLANHSLTLQKTLSAFSDQVIEFHKNAERKRKSIKEYAKKQENAYLEAVMQMDKSKSRFKGAETEYNRALDNKNTGDSQKKVGFFKPKSNAQLTKLEDEARLKAENAESDMHSKIENAQNVQKQLLCIHRPNYIKQFFSLQREIESSLIANYLRYTKLCESNTLLNGLTIRPQKPTPTNCGLQHALDNINANTDFVQYVLHASIKHEDNKNPTDASKTKIIQPPSSYGTGSSAGKTNPPVNPTIKVTAAIPSPLQNTNPAPSTFPNPSVASPAFPNSSTSNPSTAPASASPLASTLKPSTANDTNGSSSSSSSNPRTSSPLASNAENKPPVAQQSPPVLLPTLPPIQTTTIQTSREVAPPPSSINSNRAASPFRPTSVSPQPSSPTKSLLFGARLDAIILREHSNIPNIVMQCTSQVENFGLNLQGIYRVPSSSARVNMLRSQFENNPLLQLHTPEDYENDVHAVADLLKIFFRELREPLIPDNHQRDFIDAGNVEDESRRRDAVHRAINDLPDANYSTIRHLTIHLAKIKENSDVNKMSTNNLAIIWGPTIIKQATIPEISSFSRTIEILIDYCFTIFDYD</sequence>